<gene>
    <name evidence="1" type="primary">nuoH</name>
    <name type="ordered locus">Daro_0956</name>
</gene>
<evidence type="ECO:0000255" key="1">
    <source>
        <dbReference type="HAMAP-Rule" id="MF_01350"/>
    </source>
</evidence>
<reference key="1">
    <citation type="journal article" date="2009" name="BMC Genomics">
        <title>Metabolic analysis of the soil microbe Dechloromonas aromatica str. RCB: indications of a surprisingly complex life-style and cryptic anaerobic pathways for aromatic degradation.</title>
        <authorList>
            <person name="Salinero K.K."/>
            <person name="Keller K."/>
            <person name="Feil W.S."/>
            <person name="Feil H."/>
            <person name="Trong S."/>
            <person name="Di Bartolo G."/>
            <person name="Lapidus A."/>
        </authorList>
    </citation>
    <scope>NUCLEOTIDE SEQUENCE [LARGE SCALE GENOMIC DNA]</scope>
    <source>
        <strain>RCB</strain>
    </source>
</reference>
<comment type="function">
    <text evidence="1">NDH-1 shuttles electrons from NADH, via FMN and iron-sulfur (Fe-S) centers, to quinones in the respiratory chain. The immediate electron acceptor for the enzyme in this species is believed to be ubiquinone. Couples the redox reaction to proton translocation (for every two electrons transferred, four hydrogen ions are translocated across the cytoplasmic membrane), and thus conserves the redox energy in a proton gradient. This subunit may bind ubiquinone.</text>
</comment>
<comment type="catalytic activity">
    <reaction evidence="1">
        <text>a quinone + NADH + 5 H(+)(in) = a quinol + NAD(+) + 4 H(+)(out)</text>
        <dbReference type="Rhea" id="RHEA:57888"/>
        <dbReference type="ChEBI" id="CHEBI:15378"/>
        <dbReference type="ChEBI" id="CHEBI:24646"/>
        <dbReference type="ChEBI" id="CHEBI:57540"/>
        <dbReference type="ChEBI" id="CHEBI:57945"/>
        <dbReference type="ChEBI" id="CHEBI:132124"/>
    </reaction>
</comment>
<comment type="subunit">
    <text evidence="1">NDH-1 is composed of 14 different subunits. Subunits NuoA, H, J, K, L, M, N constitute the membrane sector of the complex.</text>
</comment>
<comment type="subcellular location">
    <subcellularLocation>
        <location evidence="1">Cell inner membrane</location>
        <topology evidence="1">Multi-pass membrane protein</topology>
    </subcellularLocation>
</comment>
<comment type="similarity">
    <text evidence="1">Belongs to the complex I subunit 1 family.</text>
</comment>
<keyword id="KW-0997">Cell inner membrane</keyword>
<keyword id="KW-1003">Cell membrane</keyword>
<keyword id="KW-0472">Membrane</keyword>
<keyword id="KW-0520">NAD</keyword>
<keyword id="KW-0874">Quinone</keyword>
<keyword id="KW-1278">Translocase</keyword>
<keyword id="KW-0812">Transmembrane</keyword>
<keyword id="KW-1133">Transmembrane helix</keyword>
<keyword id="KW-0830">Ubiquinone</keyword>
<name>NUOH_DECAR</name>
<protein>
    <recommendedName>
        <fullName evidence="1">NADH-quinone oxidoreductase subunit H</fullName>
        <ecNumber evidence="1">7.1.1.-</ecNumber>
    </recommendedName>
    <alternativeName>
        <fullName evidence="1">NADH dehydrogenase I subunit H</fullName>
    </alternativeName>
    <alternativeName>
        <fullName evidence="1">NDH-1 subunit H</fullName>
    </alternativeName>
</protein>
<accession>Q47HG9</accession>
<dbReference type="EC" id="7.1.1.-" evidence="1"/>
<dbReference type="EMBL" id="CP000089">
    <property type="protein sequence ID" value="AAZ45712.1"/>
    <property type="molecule type" value="Genomic_DNA"/>
</dbReference>
<dbReference type="SMR" id="Q47HG9"/>
<dbReference type="STRING" id="159087.Daro_0956"/>
<dbReference type="KEGG" id="dar:Daro_0956"/>
<dbReference type="eggNOG" id="COG1005">
    <property type="taxonomic scope" value="Bacteria"/>
</dbReference>
<dbReference type="HOGENOM" id="CLU_015134_0_1_4"/>
<dbReference type="OrthoDB" id="9803734at2"/>
<dbReference type="GO" id="GO:0005886">
    <property type="term" value="C:plasma membrane"/>
    <property type="evidence" value="ECO:0007669"/>
    <property type="project" value="UniProtKB-SubCell"/>
</dbReference>
<dbReference type="GO" id="GO:0003954">
    <property type="term" value="F:NADH dehydrogenase activity"/>
    <property type="evidence" value="ECO:0007669"/>
    <property type="project" value="TreeGrafter"/>
</dbReference>
<dbReference type="GO" id="GO:0016655">
    <property type="term" value="F:oxidoreductase activity, acting on NAD(P)H, quinone or similar compound as acceptor"/>
    <property type="evidence" value="ECO:0007669"/>
    <property type="project" value="UniProtKB-UniRule"/>
</dbReference>
<dbReference type="GO" id="GO:0048038">
    <property type="term" value="F:quinone binding"/>
    <property type="evidence" value="ECO:0007669"/>
    <property type="project" value="UniProtKB-KW"/>
</dbReference>
<dbReference type="GO" id="GO:0009060">
    <property type="term" value="P:aerobic respiration"/>
    <property type="evidence" value="ECO:0007669"/>
    <property type="project" value="TreeGrafter"/>
</dbReference>
<dbReference type="HAMAP" id="MF_01350">
    <property type="entry name" value="NDH1_NuoH"/>
    <property type="match status" value="1"/>
</dbReference>
<dbReference type="InterPro" id="IPR001694">
    <property type="entry name" value="NADH_UbQ_OxRdtase_su1/FPO"/>
</dbReference>
<dbReference type="InterPro" id="IPR018086">
    <property type="entry name" value="NADH_UbQ_OxRdtase_su1_CS"/>
</dbReference>
<dbReference type="NCBIfam" id="NF004741">
    <property type="entry name" value="PRK06076.1-2"/>
    <property type="match status" value="1"/>
</dbReference>
<dbReference type="NCBIfam" id="NF004742">
    <property type="entry name" value="PRK06076.1-3"/>
    <property type="match status" value="1"/>
</dbReference>
<dbReference type="PANTHER" id="PTHR11432">
    <property type="entry name" value="NADH DEHYDROGENASE SUBUNIT 1"/>
    <property type="match status" value="1"/>
</dbReference>
<dbReference type="PANTHER" id="PTHR11432:SF3">
    <property type="entry name" value="NADH-UBIQUINONE OXIDOREDUCTASE CHAIN 1"/>
    <property type="match status" value="1"/>
</dbReference>
<dbReference type="Pfam" id="PF00146">
    <property type="entry name" value="NADHdh"/>
    <property type="match status" value="1"/>
</dbReference>
<dbReference type="PROSITE" id="PS00667">
    <property type="entry name" value="COMPLEX1_ND1_1"/>
    <property type="match status" value="1"/>
</dbReference>
<dbReference type="PROSITE" id="PS00668">
    <property type="entry name" value="COMPLEX1_ND1_2"/>
    <property type="match status" value="1"/>
</dbReference>
<sequence length="349" mass="38702">MDALMNFGTGIFGGAWPAVWTLIKIVLIVAPMMLGVAYLTYFERKVIGYMQVRIGPNRVGPWGLIQPIADGLKLLMKEIIVPSGANKGIFIIAPMLAIAPALAAWAVVPFTDSLVLANIDASLLYIMAITSMGVYGIILSGWASNSKYAFLGAMRSAAQMVSYEISMGFSLICVLMVSNSLNLVEIVNVQNQGRFAGWGLSFLSWNWLPLFPMFLVYLISGVAETNRAPFDVAEGESEIVAGFHVEYSGMAFAVFFLAEYANMILVSALTSIMFLGGWLSPVSFLPDGILWLFAKMSAILFLFLWFRATFPRYRYDQLMRLGWKVFVPICLIWLVVVGVWMMSPLNIWK</sequence>
<organism>
    <name type="scientific">Dechloromonas aromatica (strain RCB)</name>
    <dbReference type="NCBI Taxonomy" id="159087"/>
    <lineage>
        <taxon>Bacteria</taxon>
        <taxon>Pseudomonadati</taxon>
        <taxon>Pseudomonadota</taxon>
        <taxon>Betaproteobacteria</taxon>
        <taxon>Rhodocyclales</taxon>
        <taxon>Azonexaceae</taxon>
        <taxon>Dechloromonas</taxon>
    </lineage>
</organism>
<proteinExistence type="inferred from homology"/>
<feature type="chain" id="PRO_0000240068" description="NADH-quinone oxidoreductase subunit H">
    <location>
        <begin position="1"/>
        <end position="349"/>
    </location>
</feature>
<feature type="transmembrane region" description="Helical" evidence="1">
    <location>
        <begin position="20"/>
        <end position="42"/>
    </location>
</feature>
<feature type="transmembrane region" description="Helical" evidence="1">
    <location>
        <begin position="88"/>
        <end position="108"/>
    </location>
</feature>
<feature type="transmembrane region" description="Helical" evidence="1">
    <location>
        <begin position="123"/>
        <end position="143"/>
    </location>
</feature>
<feature type="transmembrane region" description="Helical" evidence="1">
    <location>
        <begin position="167"/>
        <end position="187"/>
    </location>
</feature>
<feature type="transmembrane region" description="Helical" evidence="1">
    <location>
        <begin position="202"/>
        <end position="222"/>
    </location>
</feature>
<feature type="transmembrane region" description="Helical" evidence="1">
    <location>
        <begin position="249"/>
        <end position="269"/>
    </location>
</feature>
<feature type="transmembrane region" description="Helical" evidence="1">
    <location>
        <begin position="284"/>
        <end position="304"/>
    </location>
</feature>
<feature type="transmembrane region" description="Helical" evidence="1">
    <location>
        <begin position="325"/>
        <end position="345"/>
    </location>
</feature>